<accession>P36335</accession>
<protein>
    <recommendedName>
        <fullName evidence="3">Neural cell adhesion molecule 1-B</fullName>
        <shortName>N-CAM-1-B</shortName>
        <shortName>NCAM-1-B</shortName>
    </recommendedName>
</protein>
<name>NCA12_XENLA</name>
<sequence>MLHIKDLIWTLYFIGAAVALEVNIVPDQGEISLGESKFFLCQVSGEATDISWYSPTGEKLLNQQQISVVKNDEYTSTLTIYNVSSQDAGIYKCVASSETEGESEGTVNLKIYQKLTFKYAPTPQEFTEGEDAVIICDVSSSIPSIITWRHKGKDVIFKKDVRFVVLANNYLQIRGIKKTDEGNYRCEGRILARGEINYKDIQVIVNVPPLIQARQIRVNATANMDESVVLSCDADGFPDPEISWLKKGEPIEDGEEKISFNEDKSEMTIYRVEKEDEAEYSCIANNQAGEAEAIVLLKVYAKPKMTYVENKTTVELDEITLTCEASGDPIPSITWRTAHRNISSEEKTLDGHIVVKDHIRMSALTLKDIQYTDAGEYFCVASNPIGVDMQAMYFEVQYAPKIRGPVVVYTWEGNPVNITCDVLAHPSAAVSWFRDGQLLPSSNFSNIKIYNGPTFSSLEVNPDSENDFGNYNCSAVNSIGHESSEFILVQADTPSSPAIRKVEPYSSTVMIVFDEPDATGGVPILKYKAEWRVVGQEKWHARYYDAKEVSAESIITVTGLKPETSYMVKLSAVNGKGLGDSTPSQDFTTQPVKGEPSAPKLVGHLSEDGNSIKVDIIKQDDGGSPIRHYLVNYRALNAVDWKPEMRVPSNSHHVTLKTLEWNVDYEVIVVAENQQGKSKQARLSFRTTAKPTATTATSASTGLGTGAIVGILIVTFVLLLVVVDVTCFFLNKCGLLMCIAVNFCGKAGPGAKGKDIEEGKAAFSKDESKEPIVEVRTEEERTPNHDGSNQIEPNETTPLTEPEHPADSTATVEDMLPSVTTVTTNSDTITETFATAQNSPTSETTTLTSSTAPPPSTAPDSNTVQSVQATPSKAEVPTASSPPPTSSPKVAPLVDLSDTPTNNPSKAVANQAGALNPSAATSAAEPPTAIIKPVTTVPANTTSPPPTPEPKQVKQEQSGTKSPEKESAQPSTVKSPTEATKDESASLSNTKPLQGEDFQIDGGTFKTPEIDLAKDVFAALGTATPAAVASGKASELVSSTADTTVPPDSAKTEKTQVEENSKPEETDVKSTPAEVKTVPNEATQRNVNESKA</sequence>
<reference key="1">
    <citation type="journal article" date="1993" name="Gene">
        <title>Two neural-cell adhesion molecule (NCAM)-encoding genes in Xenopus laevis are expressed during development and in adult tissues.</title>
        <authorList>
            <person name="Tonissen K.F."/>
            <person name="Krieg P.A."/>
        </authorList>
    </citation>
    <scope>NUCLEOTIDE SEQUENCE [MRNA]</scope>
</reference>
<keyword id="KW-0025">Alternative splicing</keyword>
<keyword id="KW-0130">Cell adhesion</keyword>
<keyword id="KW-1003">Cell membrane</keyword>
<keyword id="KW-1015">Disulfide bond</keyword>
<keyword id="KW-0325">Glycoprotein</keyword>
<keyword id="KW-0393">Immunoglobulin domain</keyword>
<keyword id="KW-0472">Membrane</keyword>
<keyword id="KW-1185">Reference proteome</keyword>
<keyword id="KW-0677">Repeat</keyword>
<keyword id="KW-0732">Signal</keyword>
<keyword id="KW-0812">Transmembrane</keyword>
<keyword id="KW-1133">Transmembrane helix</keyword>
<proteinExistence type="evidence at transcript level"/>
<comment type="function">
    <text>This protein is a cell adhesion molecule involved in neuron-neuron adhesion, neurite fasciculation, outgrowth of neurites, etc.</text>
</comment>
<comment type="subcellular location">
    <subcellularLocation>
        <location>Cell membrane</location>
        <topology>Single-pass type I membrane protein</topology>
    </subcellularLocation>
</comment>
<comment type="alternative products">
    <event type="alternative splicing"/>
    <isoform>
        <id>P36335-1</id>
        <name>1</name>
        <name>N-CAM 180</name>
        <sequence type="displayed"/>
    </isoform>
    <text>A number of isoforms are produced.</text>
</comment>
<comment type="PTM">
    <text evidence="3">Polysialylated by ST8SIA2 and ST8SIA4. Polysialylation modulates cell interactions by confering both attractive and repulsive properties that are highly regulated by ST8SIA2 and ST8SIA4. Polysialylation is formed on a-2,3-linked sialic acid of core glycans.</text>
</comment>
<dbReference type="EMBL" id="M76710">
    <property type="protein sequence ID" value="AAA49910.1"/>
    <property type="molecule type" value="mRNA"/>
</dbReference>
<dbReference type="PIR" id="JN0635">
    <property type="entry name" value="JN0635"/>
</dbReference>
<dbReference type="RefSeq" id="NP_001081298.1">
    <molecule id="P36335-1"/>
    <property type="nucleotide sequence ID" value="NM_001087829.1"/>
</dbReference>
<dbReference type="SMR" id="P36335"/>
<dbReference type="GlyCosmos" id="P36335">
    <property type="glycosylation" value="7 sites, No reported glycans"/>
</dbReference>
<dbReference type="GeneID" id="397762"/>
<dbReference type="KEGG" id="xla:397762"/>
<dbReference type="AGR" id="Xenbase:XB-GENE-923178"/>
<dbReference type="CTD" id="397762"/>
<dbReference type="Xenbase" id="XB-GENE-923178">
    <property type="gene designation" value="ncam1.L"/>
</dbReference>
<dbReference type="OrthoDB" id="10056271at2759"/>
<dbReference type="Proteomes" id="UP000186698">
    <property type="component" value="Chromosome 7L"/>
</dbReference>
<dbReference type="Bgee" id="397762">
    <property type="expression patterns" value="Expressed in brain and 14 other cell types or tissues"/>
</dbReference>
<dbReference type="GO" id="GO:0030424">
    <property type="term" value="C:axon"/>
    <property type="evidence" value="ECO:0000318"/>
    <property type="project" value="GO_Central"/>
</dbReference>
<dbReference type="GO" id="GO:0043025">
    <property type="term" value="C:neuronal cell body"/>
    <property type="evidence" value="ECO:0000318"/>
    <property type="project" value="GO_Central"/>
</dbReference>
<dbReference type="GO" id="GO:0005886">
    <property type="term" value="C:plasma membrane"/>
    <property type="evidence" value="ECO:0000318"/>
    <property type="project" value="GO_Central"/>
</dbReference>
<dbReference type="GO" id="GO:0008046">
    <property type="term" value="F:axon guidance receptor activity"/>
    <property type="evidence" value="ECO:0000318"/>
    <property type="project" value="GO_Central"/>
</dbReference>
<dbReference type="GO" id="GO:0007156">
    <property type="term" value="P:homophilic cell adhesion via plasma membrane adhesion molecules"/>
    <property type="evidence" value="ECO:0000318"/>
    <property type="project" value="GO_Central"/>
</dbReference>
<dbReference type="GO" id="GO:0050808">
    <property type="term" value="P:synapse organization"/>
    <property type="evidence" value="ECO:0000318"/>
    <property type="project" value="GO_Central"/>
</dbReference>
<dbReference type="CDD" id="cd00063">
    <property type="entry name" value="FN3"/>
    <property type="match status" value="2"/>
</dbReference>
<dbReference type="CDD" id="cd00096">
    <property type="entry name" value="Ig"/>
    <property type="match status" value="2"/>
</dbReference>
<dbReference type="CDD" id="cd05730">
    <property type="entry name" value="IgI_3_NCAM-1"/>
    <property type="match status" value="1"/>
</dbReference>
<dbReference type="FunFam" id="2.60.40.10:FF:000086">
    <property type="entry name" value="Neural cell adhesion molecule 1"/>
    <property type="match status" value="1"/>
</dbReference>
<dbReference type="FunFam" id="2.60.40.10:FF:000173">
    <property type="entry name" value="Neural cell adhesion molecule 1"/>
    <property type="match status" value="1"/>
</dbReference>
<dbReference type="FunFam" id="2.60.40.10:FF:000137">
    <property type="entry name" value="neural cell adhesion molecule 1 isoform X2"/>
    <property type="match status" value="1"/>
</dbReference>
<dbReference type="FunFam" id="2.60.40.10:FF:001932">
    <property type="entry name" value="Neural cell adhesion molecule 1a"/>
    <property type="match status" value="1"/>
</dbReference>
<dbReference type="FunFam" id="2.60.40.10:FF:000636">
    <property type="entry name" value="Neural cell adhesion molecule 2"/>
    <property type="match status" value="1"/>
</dbReference>
<dbReference type="Gene3D" id="2.60.40.10">
    <property type="entry name" value="Immunoglobulins"/>
    <property type="match status" value="7"/>
</dbReference>
<dbReference type="InterPro" id="IPR003961">
    <property type="entry name" value="FN3_dom"/>
</dbReference>
<dbReference type="InterPro" id="IPR036116">
    <property type="entry name" value="FN3_sf"/>
</dbReference>
<dbReference type="InterPro" id="IPR007110">
    <property type="entry name" value="Ig-like_dom"/>
</dbReference>
<dbReference type="InterPro" id="IPR036179">
    <property type="entry name" value="Ig-like_dom_sf"/>
</dbReference>
<dbReference type="InterPro" id="IPR013783">
    <property type="entry name" value="Ig-like_fold"/>
</dbReference>
<dbReference type="InterPro" id="IPR013098">
    <property type="entry name" value="Ig_I-set"/>
</dbReference>
<dbReference type="InterPro" id="IPR003599">
    <property type="entry name" value="Ig_sub"/>
</dbReference>
<dbReference type="InterPro" id="IPR003598">
    <property type="entry name" value="Ig_sub2"/>
</dbReference>
<dbReference type="InterPro" id="IPR051170">
    <property type="entry name" value="Neural/epithelial_adhesion"/>
</dbReference>
<dbReference type="InterPro" id="IPR009138">
    <property type="entry name" value="Neural_cell_adh"/>
</dbReference>
<dbReference type="PANTHER" id="PTHR12231">
    <property type="entry name" value="CTX-RELATED TYPE I TRANSMEMBRANE PROTEIN"/>
    <property type="match status" value="1"/>
</dbReference>
<dbReference type="PANTHER" id="PTHR12231:SF253">
    <property type="entry name" value="DPR-INTERACTING PROTEIN ETA, ISOFORM B-RELATED"/>
    <property type="match status" value="1"/>
</dbReference>
<dbReference type="Pfam" id="PF00041">
    <property type="entry name" value="fn3"/>
    <property type="match status" value="2"/>
</dbReference>
<dbReference type="Pfam" id="PF07679">
    <property type="entry name" value="I-set"/>
    <property type="match status" value="3"/>
</dbReference>
<dbReference type="Pfam" id="PF13927">
    <property type="entry name" value="Ig_3"/>
    <property type="match status" value="2"/>
</dbReference>
<dbReference type="PRINTS" id="PR01838">
    <property type="entry name" value="NCAMFAMILY"/>
</dbReference>
<dbReference type="SMART" id="SM00060">
    <property type="entry name" value="FN3"/>
    <property type="match status" value="2"/>
</dbReference>
<dbReference type="SMART" id="SM00409">
    <property type="entry name" value="IG"/>
    <property type="match status" value="5"/>
</dbReference>
<dbReference type="SMART" id="SM00408">
    <property type="entry name" value="IGc2"/>
    <property type="match status" value="5"/>
</dbReference>
<dbReference type="SUPFAM" id="SSF49265">
    <property type="entry name" value="Fibronectin type III"/>
    <property type="match status" value="1"/>
</dbReference>
<dbReference type="SUPFAM" id="SSF48726">
    <property type="entry name" value="Immunoglobulin"/>
    <property type="match status" value="5"/>
</dbReference>
<dbReference type="PROSITE" id="PS50853">
    <property type="entry name" value="FN3"/>
    <property type="match status" value="2"/>
</dbReference>
<dbReference type="PROSITE" id="PS50835">
    <property type="entry name" value="IG_LIKE"/>
    <property type="match status" value="5"/>
</dbReference>
<organism>
    <name type="scientific">Xenopus laevis</name>
    <name type="common">African clawed frog</name>
    <dbReference type="NCBI Taxonomy" id="8355"/>
    <lineage>
        <taxon>Eukaryota</taxon>
        <taxon>Metazoa</taxon>
        <taxon>Chordata</taxon>
        <taxon>Craniata</taxon>
        <taxon>Vertebrata</taxon>
        <taxon>Euteleostomi</taxon>
        <taxon>Amphibia</taxon>
        <taxon>Batrachia</taxon>
        <taxon>Anura</taxon>
        <taxon>Pipoidea</taxon>
        <taxon>Pipidae</taxon>
        <taxon>Xenopodinae</taxon>
        <taxon>Xenopus</taxon>
        <taxon>Xenopus</taxon>
    </lineage>
</organism>
<gene>
    <name evidence="3" type="primary">ncam1-b</name>
</gene>
<feature type="signal peptide" evidence="1">
    <location>
        <begin position="1"/>
        <end position="19"/>
    </location>
</feature>
<feature type="chain" id="PRO_0000015017" description="Neural cell adhesion molecule 1-B">
    <location>
        <begin position="20"/>
        <end position="1092"/>
    </location>
</feature>
<feature type="topological domain" description="Extracellular" evidence="5">
    <location>
        <begin position="20"/>
        <end position="705"/>
    </location>
</feature>
<feature type="transmembrane region" description="Helical" evidence="5">
    <location>
        <begin position="706"/>
        <end position="723"/>
    </location>
</feature>
<feature type="topological domain" description="Cytoplasmic" evidence="5">
    <location>
        <begin position="724"/>
        <end position="1092"/>
    </location>
</feature>
<feature type="domain" description="Ig-like C2-type 1">
    <location>
        <begin position="20"/>
        <end position="108"/>
    </location>
</feature>
<feature type="domain" description="Ig-like C2-type 2">
    <location>
        <begin position="113"/>
        <end position="202"/>
    </location>
</feature>
<feature type="domain" description="Ig-like C2-type 3">
    <location>
        <begin position="208"/>
        <end position="295"/>
    </location>
</feature>
<feature type="domain" description="Ig-like C2-type 4">
    <location>
        <begin position="303"/>
        <end position="397"/>
    </location>
</feature>
<feature type="domain" description="Ig-like C2-type 5">
    <location>
        <begin position="400"/>
        <end position="489"/>
    </location>
</feature>
<feature type="domain" description="Fibronectin type-III 1" evidence="6">
    <location>
        <begin position="493"/>
        <end position="592"/>
    </location>
</feature>
<feature type="domain" description="Fibronectin type-III 2" evidence="6">
    <location>
        <begin position="595"/>
        <end position="691"/>
    </location>
</feature>
<feature type="region of interest" description="Disordered" evidence="7">
    <location>
        <begin position="754"/>
        <end position="1005"/>
    </location>
</feature>
<feature type="region of interest" description="Disordered" evidence="7">
    <location>
        <begin position="1024"/>
        <end position="1092"/>
    </location>
</feature>
<feature type="compositionally biased region" description="Basic and acidic residues" evidence="7">
    <location>
        <begin position="754"/>
        <end position="784"/>
    </location>
</feature>
<feature type="compositionally biased region" description="Low complexity" evidence="7">
    <location>
        <begin position="820"/>
        <end position="832"/>
    </location>
</feature>
<feature type="compositionally biased region" description="Low complexity" evidence="7">
    <location>
        <begin position="839"/>
        <end position="851"/>
    </location>
</feature>
<feature type="compositionally biased region" description="Polar residues" evidence="7">
    <location>
        <begin position="860"/>
        <end position="871"/>
    </location>
</feature>
<feature type="compositionally biased region" description="Low complexity" evidence="7">
    <location>
        <begin position="917"/>
        <end position="929"/>
    </location>
</feature>
<feature type="compositionally biased region" description="Polar residues" evidence="7">
    <location>
        <begin position="968"/>
        <end position="978"/>
    </location>
</feature>
<feature type="compositionally biased region" description="Basic and acidic residues" evidence="7">
    <location>
        <begin position="1050"/>
        <end position="1068"/>
    </location>
</feature>
<feature type="compositionally biased region" description="Polar residues" evidence="7">
    <location>
        <begin position="1080"/>
        <end position="1092"/>
    </location>
</feature>
<feature type="binding site" evidence="5">
    <location>
        <begin position="149"/>
        <end position="153"/>
    </location>
    <ligand>
        <name>heparin</name>
        <dbReference type="ChEBI" id="CHEBI:28304"/>
    </ligand>
</feature>
<feature type="binding site" evidence="5">
    <location>
        <begin position="158"/>
        <end position="162"/>
    </location>
    <ligand>
        <name>heparin</name>
        <dbReference type="ChEBI" id="CHEBI:28304"/>
    </ligand>
</feature>
<feature type="glycosylation site" description="N-linked (GlcNAc...) asparagine" evidence="5">
    <location>
        <position position="82"/>
    </location>
</feature>
<feature type="glycosylation site" description="N-linked (GlcNAc...) asparagine" evidence="5">
    <location>
        <position position="219"/>
    </location>
</feature>
<feature type="glycosylation site" description="N-linked (GlcNAc...) asparagine" evidence="5">
    <location>
        <position position="310"/>
    </location>
</feature>
<feature type="glycosylation site" description="N-linked (GlcNAc...) asparagine" evidence="5">
    <location>
        <position position="341"/>
    </location>
</feature>
<feature type="glycosylation site" description="N-linked (GlcNAc...) asparagine" evidence="5">
    <location>
        <position position="417"/>
    </location>
</feature>
<feature type="glycosylation site" description="N-linked (GlcNAc...) asparagine" evidence="5">
    <location>
        <position position="443"/>
    </location>
</feature>
<feature type="glycosylation site" description="N-linked (GlcNAc...) asparagine" evidence="5">
    <location>
        <position position="472"/>
    </location>
</feature>
<feature type="disulfide bond" evidence="4">
    <location>
        <begin position="41"/>
        <end position="93"/>
    </location>
</feature>
<feature type="disulfide bond" evidence="4">
    <location>
        <begin position="136"/>
        <end position="186"/>
    </location>
</feature>
<feature type="disulfide bond" evidence="2">
    <location>
        <begin position="232"/>
        <end position="282"/>
    </location>
</feature>
<feature type="disulfide bond" evidence="8">
    <location>
        <begin position="323"/>
        <end position="379"/>
    </location>
</feature>
<feature type="disulfide bond" evidence="8">
    <location>
        <begin position="420"/>
        <end position="473"/>
    </location>
</feature>
<evidence type="ECO:0000250" key="1"/>
<evidence type="ECO:0000250" key="2">
    <source>
        <dbReference type="UniProtKB" id="P13590"/>
    </source>
</evidence>
<evidence type="ECO:0000250" key="3">
    <source>
        <dbReference type="UniProtKB" id="P13591"/>
    </source>
</evidence>
<evidence type="ECO:0000250" key="4">
    <source>
        <dbReference type="UniProtKB" id="P13595"/>
    </source>
</evidence>
<evidence type="ECO:0000255" key="5"/>
<evidence type="ECO:0000255" key="6">
    <source>
        <dbReference type="PROSITE-ProRule" id="PRU00316"/>
    </source>
</evidence>
<evidence type="ECO:0000256" key="7">
    <source>
        <dbReference type="SAM" id="MobiDB-lite"/>
    </source>
</evidence>
<evidence type="ECO:0000305" key="8"/>